<evidence type="ECO:0000250" key="1"/>
<evidence type="ECO:0000250" key="2">
    <source>
        <dbReference type="UniProtKB" id="P13720"/>
    </source>
</evidence>
<evidence type="ECO:0000269" key="3">
    <source>
    </source>
</evidence>
<evidence type="ECO:0000269" key="4">
    <source>
    </source>
</evidence>
<evidence type="ECO:0000269" key="5">
    <source>
    </source>
</evidence>
<evidence type="ECO:0000303" key="6">
    <source>
    </source>
</evidence>
<evidence type="ECO:0000303" key="7">
    <source>
    </source>
</evidence>
<evidence type="ECO:0000305" key="8"/>
<dbReference type="EMBL" id="X62158">
    <property type="protein sequence ID" value="CAA44089.1"/>
    <property type="molecule type" value="Genomic_DNA"/>
</dbReference>
<dbReference type="PIR" id="S25212">
    <property type="entry name" value="S25212"/>
</dbReference>
<dbReference type="SMR" id="P42188"/>
<dbReference type="GO" id="GO:0005576">
    <property type="term" value="C:extracellular region"/>
    <property type="evidence" value="ECO:0007669"/>
    <property type="project" value="UniProtKB-SubCell"/>
</dbReference>
<dbReference type="GO" id="GO:0009289">
    <property type="term" value="C:pilus"/>
    <property type="evidence" value="ECO:0007669"/>
    <property type="project" value="UniProtKB-SubCell"/>
</dbReference>
<dbReference type="GO" id="GO:0030246">
    <property type="term" value="F:carbohydrate binding"/>
    <property type="evidence" value="ECO:0007669"/>
    <property type="project" value="InterPro"/>
</dbReference>
<dbReference type="GO" id="GO:0007155">
    <property type="term" value="P:cell adhesion"/>
    <property type="evidence" value="ECO:0007669"/>
    <property type="project" value="UniProtKB-KW"/>
</dbReference>
<dbReference type="CDD" id="cd00239">
    <property type="entry name" value="PapG_CBD"/>
    <property type="match status" value="1"/>
</dbReference>
<dbReference type="Gene3D" id="2.60.40.1370">
    <property type="entry name" value="Bacterial adhesin receptor binding domain"/>
    <property type="match status" value="1"/>
</dbReference>
<dbReference type="Gene3D" id="2.60.40.1090">
    <property type="entry name" value="Fimbrial-type adhesion domain"/>
    <property type="match status" value="1"/>
</dbReference>
<dbReference type="InterPro" id="IPR036937">
    <property type="entry name" value="Adhesion_dom_fimbrial_sf"/>
</dbReference>
<dbReference type="InterPro" id="IPR008966">
    <property type="entry name" value="Adhesion_dom_sf"/>
</dbReference>
<dbReference type="InterPro" id="IPR005310">
    <property type="entry name" value="PapG_carb-bd_N"/>
</dbReference>
<dbReference type="InterPro" id="IPR038420">
    <property type="entry name" value="PapG_carbohydrate-bd_sf"/>
</dbReference>
<dbReference type="InterPro" id="IPR005309">
    <property type="entry name" value="PapG_chaper-bd_C"/>
</dbReference>
<dbReference type="Pfam" id="PF03628">
    <property type="entry name" value="PapG_C"/>
    <property type="match status" value="1"/>
</dbReference>
<dbReference type="Pfam" id="PF03627">
    <property type="entry name" value="PapG_N"/>
    <property type="match status" value="1"/>
</dbReference>
<dbReference type="SUPFAM" id="SSF49401">
    <property type="entry name" value="Bacterial adhesins"/>
    <property type="match status" value="1"/>
</dbReference>
<sequence>MKKWLPAFLFLSLSGCNDALAANQSTMFYSFNDNIYRPQLSVKVTDIVQFIVDINSASSTATLSYVACNGFTWTHGLYWSEYFAWLVVPKHVSYNGYNIYLELQSRGSFSLDAEDNDNYYLTKGFAWDEANTSGQTCFNIGEKRSLAWSFGGVTLNARLPVDLPKGDYTFPVKFLRGIQRNNYDYIGGRYKIPSSLMKTFPFNGTLNFSIKNTGGCRPSAQSLEINHGDLSINSANNHYAAQTLSVSCDVPTNIRFFLLSNTNPAYSHGQQFSVGLGHGWDSIISINGVDTGETTMRWYRAGTQNLTTGSRLYGESSKIQPGVLSGSATLLMILP</sequence>
<gene>
    <name evidence="6" type="primary">papGIII</name>
    <name evidence="7" type="synonym">prsG</name>
</gene>
<feature type="signal peptide" evidence="1">
    <location>
        <begin position="1"/>
        <end position="21"/>
    </location>
</feature>
<feature type="chain" id="PRO_0000022155" description="Fimbrial adhesin PapGIII">
    <location>
        <begin position="22"/>
        <end position="335"/>
    </location>
</feature>
<organism>
    <name type="scientific">Escherichia coli</name>
    <dbReference type="NCBI Taxonomy" id="562"/>
    <lineage>
        <taxon>Bacteria</taxon>
        <taxon>Pseudomonadati</taxon>
        <taxon>Pseudomonadota</taxon>
        <taxon>Gammaproteobacteria</taxon>
        <taxon>Enterobacterales</taxon>
        <taxon>Enterobacteriaceae</taxon>
        <taxon>Escherichia</taxon>
    </lineage>
</organism>
<proteinExistence type="inferred from homology"/>
<name>PAPG3_ECOLX</name>
<protein>
    <recommendedName>
        <fullName evidence="6">Fimbrial adhesin PapGIII</fullName>
    </recommendedName>
    <alternativeName>
        <fullName>Adhesin</fullName>
    </alternativeName>
</protein>
<keyword id="KW-0130">Cell adhesion</keyword>
<keyword id="KW-0281">Fimbrium</keyword>
<keyword id="KW-0964">Secreted</keyword>
<keyword id="KW-0732">Signal</keyword>
<comment type="function">
    <text evidence="3 4 5">Tip adhesin component of type P pili that binds preferentially to Gal-alpha(1-4)-Gal-containing glycolipids such as globoside (PubMed:1693334, PubMed:31361021). This tip is common in E.coli strains that cause human cystitis, but rare in pyelonephritic isolates (PubMed:7902954).</text>
</comment>
<comment type="subcellular location">
    <subcellularLocation>
        <location evidence="2">Secreted</location>
    </subcellularLocation>
    <subcellularLocation>
        <location evidence="2">Fimbrium</location>
    </subcellularLocation>
    <text evidence="2">At the tip of P pili.</text>
</comment>
<comment type="similarity">
    <text evidence="8">Belongs to the adhesin PapG family.</text>
</comment>
<reference key="1">
    <citation type="journal article" date="1992" name="Mol. Microbiol.">
        <title>Horizontal gene transfer of the Escherichia coli pap and prs pili operons as a mechanism for the development of tissue-specific adhesive properties.</title>
        <authorList>
            <person name="Marklund B.-I."/>
            <person name="Tennent J.M."/>
            <person name="Garcia E."/>
            <person name="Hamers A."/>
            <person name="Baga M."/>
            <person name="Lindberg F."/>
            <person name="Gaastra W."/>
            <person name="Normark S."/>
        </authorList>
    </citation>
    <scope>NUCLEOTIDE SEQUENCE [GENOMIC DNA]</scope>
    <source>
        <strain>1442</strain>
    </source>
</reference>
<reference key="2">
    <citation type="journal article" date="1990" name="EMBO J.">
        <title>Host-specificity of uropathogenic Escherichia coli depends on differences in binding specificity to Gal alpha 1-4Gal-containing isoreceptors.</title>
        <authorList>
            <person name="Stroemberg N."/>
            <person name="Marklund B.I."/>
            <person name="Lund B."/>
            <person name="Ilver D."/>
            <person name="Hamers A."/>
            <person name="Gaastra W."/>
            <person name="Karlsson K.A."/>
            <person name="Normark S."/>
        </authorList>
    </citation>
    <scope>FUNCTION</scope>
    <source>
        <strain>ATCC 700336 / J96 / UPEC</strain>
    </source>
</reference>
<reference key="3">
    <citation type="journal article" date="1993" name="Microb. Pathog.">
        <title>Pap, papG and prsG DNA sequences in Escherichia coli from the fecal flora and the urinary tract.</title>
        <authorList>
            <person name="Johanson I.M."/>
            <person name="Plos K."/>
            <person name="Marklund B.I."/>
            <person name="Svanborg C."/>
        </authorList>
    </citation>
    <scope>FUNCTION</scope>
</reference>
<reference key="4">
    <citation type="journal article" date="2019" name="Glycobiology">
        <title>PapG subtype-specific binding characteristics of Escherichia coli towards globo-series glycosphingolipids of human kidney and bladder uroepithelial cells.</title>
        <authorList>
            <person name="Legros N."/>
            <person name="Ptascheck S."/>
            <person name="Pohlentz G."/>
            <person name="Karch H."/>
            <person name="Dobrindt U."/>
            <person name="Muething J."/>
        </authorList>
    </citation>
    <scope>FUNCTION</scope>
</reference>
<accession>P42188</accession>